<accession>P27591</accession>
<protein>
    <recommendedName>
        <fullName>23 kDa integral membrane protein</fullName>
    </recommendedName>
    <alternativeName>
        <fullName>Sj23</fullName>
    </alternativeName>
</protein>
<feature type="chain" id="PRO_0000219281" description="23 kDa integral membrane protein">
    <location>
        <begin position="1"/>
        <end position="218"/>
    </location>
</feature>
<feature type="topological domain" description="Cytoplasmic" evidence="1">
    <location>
        <begin position="1"/>
        <end position="12"/>
    </location>
</feature>
<feature type="transmembrane region" description="Helical" evidence="1">
    <location>
        <begin position="13"/>
        <end position="36"/>
    </location>
</feature>
<feature type="topological domain" description="Extracellular" evidence="1">
    <location>
        <begin position="37"/>
        <end position="55"/>
    </location>
</feature>
<feature type="transmembrane region" description="Helical" evidence="1">
    <location>
        <begin position="56"/>
        <end position="71"/>
    </location>
</feature>
<feature type="topological domain" description="Cytoplasmic" evidence="1">
    <location>
        <begin position="72"/>
        <end position="82"/>
    </location>
</feature>
<feature type="transmembrane region" description="Helical" evidence="1">
    <location>
        <begin position="83"/>
        <end position="108"/>
    </location>
</feature>
<feature type="topological domain" description="Extracellular" evidence="1">
    <location>
        <begin position="109"/>
        <end position="183"/>
    </location>
</feature>
<feature type="transmembrane region" description="Helical" evidence="1">
    <location>
        <begin position="184"/>
        <end position="205"/>
    </location>
</feature>
<feature type="topological domain" description="Cytoplasmic" evidence="1">
    <location>
        <begin position="206"/>
        <end position="218"/>
    </location>
</feature>
<organism>
    <name type="scientific">Schistosoma japonicum</name>
    <name type="common">Blood fluke</name>
    <dbReference type="NCBI Taxonomy" id="6182"/>
    <lineage>
        <taxon>Eukaryota</taxon>
        <taxon>Metazoa</taxon>
        <taxon>Spiralia</taxon>
        <taxon>Lophotrochozoa</taxon>
        <taxon>Platyhelminthes</taxon>
        <taxon>Trematoda</taxon>
        <taxon>Digenea</taxon>
        <taxon>Strigeidida</taxon>
        <taxon>Schistosomatoidea</taxon>
        <taxon>Schistosomatidae</taxon>
        <taxon>Schistosoma</taxon>
    </lineage>
</organism>
<name>IM23_SCHJA</name>
<comment type="subcellular location">
    <subcellularLocation>
        <location>Membrane</location>
        <topology>Multi-pass membrane protein</topology>
    </subcellularLocation>
</comment>
<comment type="similarity">
    <text evidence="2">Belongs to the tetraspanin (TM4SF) family.</text>
</comment>
<reference key="1">
    <citation type="journal article" date="1991" name="Mol. Biochem. Parasitol.">
        <title>Further characterisation of the Schistosoma japonicum protein Sj23, a target antigen of an immunodiagnostic monoclonal antibody.</title>
        <authorList>
            <person name="Davern K.M."/>
            <person name="Wright M.D."/>
            <person name="Herrmann V.R."/>
            <person name="Mitchell G.F."/>
        </authorList>
    </citation>
    <scope>NUCLEOTIDE SEQUENCE [MRNA]</scope>
</reference>
<evidence type="ECO:0000255" key="1"/>
<evidence type="ECO:0000305" key="2"/>
<proteinExistence type="evidence at transcript level"/>
<sequence>MATLGTGMRCLKSCVFILNIICLLCSLVLIGAGAYVEVKFSQYEANLHKVWQAAPIAIIVVGVVILIVSFLGCCGAIKENVCMLYMYAFFLIVLLIAELVAAIVAVVYKDKIDDEINTLMTGALENPNEEITATMDKIQTSFHCCGVKGPDDYKGNVPASCKEGQEVYVQGCLSVFSAFLKRNLIIVACVAFGVCFFQLLSIVIACCLGQRIHDYQNV</sequence>
<dbReference type="EMBL" id="M63706">
    <property type="protein sequence ID" value="AAA29920.1"/>
    <property type="molecule type" value="mRNA"/>
</dbReference>
<dbReference type="PIR" id="A40181">
    <property type="entry name" value="A40181"/>
</dbReference>
<dbReference type="SMR" id="P27591"/>
<dbReference type="OrthoDB" id="10033535at2759"/>
<dbReference type="GO" id="GO:0005886">
    <property type="term" value="C:plasma membrane"/>
    <property type="evidence" value="ECO:0007669"/>
    <property type="project" value="TreeGrafter"/>
</dbReference>
<dbReference type="CDD" id="cd03127">
    <property type="entry name" value="tetraspanin_LEL"/>
    <property type="match status" value="1"/>
</dbReference>
<dbReference type="Gene3D" id="1.10.1450.10">
    <property type="entry name" value="Tetraspanin"/>
    <property type="match status" value="1"/>
</dbReference>
<dbReference type="InterPro" id="IPR018499">
    <property type="entry name" value="Tetraspanin/Peripherin"/>
</dbReference>
<dbReference type="InterPro" id="IPR000301">
    <property type="entry name" value="Tetraspanin_animals"/>
</dbReference>
<dbReference type="InterPro" id="IPR018503">
    <property type="entry name" value="Tetraspanin_CS"/>
</dbReference>
<dbReference type="InterPro" id="IPR008952">
    <property type="entry name" value="Tetraspanin_EC2_sf"/>
</dbReference>
<dbReference type="PANTHER" id="PTHR19282">
    <property type="entry name" value="TETRASPANIN"/>
    <property type="match status" value="1"/>
</dbReference>
<dbReference type="PANTHER" id="PTHR19282:SF544">
    <property type="entry name" value="TETRASPANIN"/>
    <property type="match status" value="1"/>
</dbReference>
<dbReference type="Pfam" id="PF00335">
    <property type="entry name" value="Tetraspanin"/>
    <property type="match status" value="1"/>
</dbReference>
<dbReference type="PIRSF" id="PIRSF002419">
    <property type="entry name" value="Tetraspanin"/>
    <property type="match status" value="1"/>
</dbReference>
<dbReference type="PRINTS" id="PR00259">
    <property type="entry name" value="TMFOUR"/>
</dbReference>
<dbReference type="SUPFAM" id="SSF48652">
    <property type="entry name" value="Tetraspanin"/>
    <property type="match status" value="1"/>
</dbReference>
<dbReference type="PROSITE" id="PS00421">
    <property type="entry name" value="TM4_1"/>
    <property type="match status" value="1"/>
</dbReference>
<keyword id="KW-0472">Membrane</keyword>
<keyword id="KW-0812">Transmembrane</keyword>
<keyword id="KW-1133">Transmembrane helix</keyword>